<protein>
    <recommendedName>
        <fullName evidence="1">Small ribosomal subunit protein uS13</fullName>
    </recommendedName>
    <alternativeName>
        <fullName evidence="3">30S ribosomal protein S13</fullName>
    </alternativeName>
</protein>
<proteinExistence type="inferred from homology"/>
<comment type="function">
    <text evidence="1">Located at the top of the head of the 30S subunit, it contacts several helices of the 16S rRNA. In the 70S ribosome it contacts the 23S rRNA (bridge B1a) and protein L5 of the 50S subunit (bridge B1b), connecting the 2 subunits; these bridges are implicated in subunit movement. Contacts the tRNAs in the A and P-sites.</text>
</comment>
<comment type="subunit">
    <text evidence="1">Part of the 30S ribosomal subunit. Forms a loose heterodimer with protein S19. Forms two bridges to the 50S subunit in the 70S ribosome.</text>
</comment>
<comment type="similarity">
    <text evidence="1">Belongs to the universal ribosomal protein uS13 family.</text>
</comment>
<feature type="chain" id="PRO_0000230471" description="Small ribosomal subunit protein uS13">
    <location>
        <begin position="1"/>
        <end position="126"/>
    </location>
</feature>
<feature type="region of interest" description="Disordered" evidence="2">
    <location>
        <begin position="98"/>
        <end position="126"/>
    </location>
</feature>
<feature type="compositionally biased region" description="Basic residues" evidence="2">
    <location>
        <begin position="108"/>
        <end position="126"/>
    </location>
</feature>
<reference key="1">
    <citation type="journal article" date="2004" name="Proc. Natl. Acad. Sci. U.S.A.">
        <title>Genomic analysis of Bacteroides fragilis reveals extensive DNA inversions regulating cell surface adaptation.</title>
        <authorList>
            <person name="Kuwahara T."/>
            <person name="Yamashita A."/>
            <person name="Hirakawa H."/>
            <person name="Nakayama H."/>
            <person name="Toh H."/>
            <person name="Okada N."/>
            <person name="Kuhara S."/>
            <person name="Hattori M."/>
            <person name="Hayashi T."/>
            <person name="Ohnishi Y."/>
        </authorList>
    </citation>
    <scope>NUCLEOTIDE SEQUENCE [LARGE SCALE GENOMIC DNA]</scope>
    <source>
        <strain>YCH46</strain>
    </source>
</reference>
<keyword id="KW-0687">Ribonucleoprotein</keyword>
<keyword id="KW-0689">Ribosomal protein</keyword>
<keyword id="KW-0694">RNA-binding</keyword>
<keyword id="KW-0699">rRNA-binding</keyword>
<keyword id="KW-0820">tRNA-binding</keyword>
<accession>Q64NN2</accession>
<name>RS13_BACFR</name>
<evidence type="ECO:0000255" key="1">
    <source>
        <dbReference type="HAMAP-Rule" id="MF_01315"/>
    </source>
</evidence>
<evidence type="ECO:0000256" key="2">
    <source>
        <dbReference type="SAM" id="MobiDB-lite"/>
    </source>
</evidence>
<evidence type="ECO:0000305" key="3"/>
<sequence>MAIRIVGVDLPQNKRGEIALTYVYGIGRSSSAKILDKAGVDKDLKVKDWTDDQAAKIREIIGAEYKVEGDLRSEVQLNIKRLMDIGCYRGVRHRIGLPVRGQSTKNNARTRKGRKKTVANKKKATK</sequence>
<gene>
    <name evidence="1" type="primary">rpsM</name>
    <name type="ordered locus">BF4158</name>
</gene>
<organism>
    <name type="scientific">Bacteroides fragilis (strain YCH46)</name>
    <dbReference type="NCBI Taxonomy" id="295405"/>
    <lineage>
        <taxon>Bacteria</taxon>
        <taxon>Pseudomonadati</taxon>
        <taxon>Bacteroidota</taxon>
        <taxon>Bacteroidia</taxon>
        <taxon>Bacteroidales</taxon>
        <taxon>Bacteroidaceae</taxon>
        <taxon>Bacteroides</taxon>
    </lineage>
</organism>
<dbReference type="EMBL" id="AP006841">
    <property type="protein sequence ID" value="BAD50900.1"/>
    <property type="molecule type" value="Genomic_DNA"/>
</dbReference>
<dbReference type="RefSeq" id="WP_002558050.1">
    <property type="nucleotide sequence ID" value="NZ_UYXF01000007.1"/>
</dbReference>
<dbReference type="RefSeq" id="YP_101434.1">
    <property type="nucleotide sequence ID" value="NC_006347.1"/>
</dbReference>
<dbReference type="SMR" id="Q64NN2"/>
<dbReference type="STRING" id="295405.BF4158"/>
<dbReference type="GeneID" id="93105300"/>
<dbReference type="KEGG" id="bfr:BF4158"/>
<dbReference type="PATRIC" id="fig|295405.11.peg.4011"/>
<dbReference type="HOGENOM" id="CLU_103849_1_2_10"/>
<dbReference type="OrthoDB" id="9803610at2"/>
<dbReference type="Proteomes" id="UP000002197">
    <property type="component" value="Chromosome"/>
</dbReference>
<dbReference type="GO" id="GO:0005829">
    <property type="term" value="C:cytosol"/>
    <property type="evidence" value="ECO:0007669"/>
    <property type="project" value="TreeGrafter"/>
</dbReference>
<dbReference type="GO" id="GO:0015935">
    <property type="term" value="C:small ribosomal subunit"/>
    <property type="evidence" value="ECO:0007669"/>
    <property type="project" value="TreeGrafter"/>
</dbReference>
<dbReference type="GO" id="GO:0019843">
    <property type="term" value="F:rRNA binding"/>
    <property type="evidence" value="ECO:0007669"/>
    <property type="project" value="UniProtKB-UniRule"/>
</dbReference>
<dbReference type="GO" id="GO:0003735">
    <property type="term" value="F:structural constituent of ribosome"/>
    <property type="evidence" value="ECO:0007669"/>
    <property type="project" value="InterPro"/>
</dbReference>
<dbReference type="GO" id="GO:0000049">
    <property type="term" value="F:tRNA binding"/>
    <property type="evidence" value="ECO:0007669"/>
    <property type="project" value="UniProtKB-UniRule"/>
</dbReference>
<dbReference type="GO" id="GO:0006412">
    <property type="term" value="P:translation"/>
    <property type="evidence" value="ECO:0007669"/>
    <property type="project" value="UniProtKB-UniRule"/>
</dbReference>
<dbReference type="FunFam" id="1.10.8.50:FF:000001">
    <property type="entry name" value="30S ribosomal protein S13"/>
    <property type="match status" value="1"/>
</dbReference>
<dbReference type="FunFam" id="4.10.910.10:FF:000001">
    <property type="entry name" value="30S ribosomal protein S13"/>
    <property type="match status" value="1"/>
</dbReference>
<dbReference type="Gene3D" id="1.10.8.50">
    <property type="match status" value="1"/>
</dbReference>
<dbReference type="Gene3D" id="4.10.910.10">
    <property type="entry name" value="30s ribosomal protein s13, domain 2"/>
    <property type="match status" value="1"/>
</dbReference>
<dbReference type="HAMAP" id="MF_01315">
    <property type="entry name" value="Ribosomal_uS13"/>
    <property type="match status" value="1"/>
</dbReference>
<dbReference type="InterPro" id="IPR027437">
    <property type="entry name" value="Rbsml_uS13_C"/>
</dbReference>
<dbReference type="InterPro" id="IPR001892">
    <property type="entry name" value="Ribosomal_uS13"/>
</dbReference>
<dbReference type="InterPro" id="IPR010979">
    <property type="entry name" value="Ribosomal_uS13-like_H2TH"/>
</dbReference>
<dbReference type="InterPro" id="IPR019980">
    <property type="entry name" value="Ribosomal_uS13_bac-type"/>
</dbReference>
<dbReference type="InterPro" id="IPR018269">
    <property type="entry name" value="Ribosomal_uS13_CS"/>
</dbReference>
<dbReference type="NCBIfam" id="TIGR03631">
    <property type="entry name" value="uS13_bact"/>
    <property type="match status" value="1"/>
</dbReference>
<dbReference type="PANTHER" id="PTHR10871">
    <property type="entry name" value="30S RIBOSOMAL PROTEIN S13/40S RIBOSOMAL PROTEIN S18"/>
    <property type="match status" value="1"/>
</dbReference>
<dbReference type="PANTHER" id="PTHR10871:SF1">
    <property type="entry name" value="SMALL RIBOSOMAL SUBUNIT PROTEIN US13M"/>
    <property type="match status" value="1"/>
</dbReference>
<dbReference type="Pfam" id="PF00416">
    <property type="entry name" value="Ribosomal_S13"/>
    <property type="match status" value="1"/>
</dbReference>
<dbReference type="PIRSF" id="PIRSF002134">
    <property type="entry name" value="Ribosomal_S13"/>
    <property type="match status" value="1"/>
</dbReference>
<dbReference type="SUPFAM" id="SSF46946">
    <property type="entry name" value="S13-like H2TH domain"/>
    <property type="match status" value="1"/>
</dbReference>
<dbReference type="PROSITE" id="PS00646">
    <property type="entry name" value="RIBOSOMAL_S13_1"/>
    <property type="match status" value="1"/>
</dbReference>
<dbReference type="PROSITE" id="PS50159">
    <property type="entry name" value="RIBOSOMAL_S13_2"/>
    <property type="match status" value="1"/>
</dbReference>